<keyword id="KW-0025">Alternative splicing</keyword>
<keyword id="KW-0965">Cell junction</keyword>
<keyword id="KW-1003">Cell membrane</keyword>
<keyword id="KW-1015">Disulfide bond</keyword>
<keyword id="KW-0967">Endosome</keyword>
<keyword id="KW-0297">G-protein coupled receptor</keyword>
<keyword id="KW-0325">Glycoprotein</keyword>
<keyword id="KW-1017">Isopeptide bond</keyword>
<keyword id="KW-0458">Lysosome</keyword>
<keyword id="KW-0472">Membrane</keyword>
<keyword id="KW-0597">Phosphoprotein</keyword>
<keyword id="KW-0654">Proteoglycan</keyword>
<keyword id="KW-0675">Receptor</keyword>
<keyword id="KW-1185">Reference proteome</keyword>
<keyword id="KW-0765">Sulfation</keyword>
<keyword id="KW-0807">Transducer</keyword>
<keyword id="KW-0812">Transmembrane</keyword>
<keyword id="KW-1133">Transmembrane helix</keyword>
<keyword id="KW-0832">Ubl conjugation</keyword>
<comment type="function">
    <text evidence="2 6 7 8 9 10 11">Receptor for the C-X-C chemokine CXCL12/SDF-1 that transduces a signal by increasing intracellular calcium ion levels and enhancing MAPK1/MAPK3 activation (PubMed:8962122, PubMed:9103415, PubMed:9295051). Involved in the AKT signaling cascade (By similarity). Plays a role in regulation of cell migration, e.g. during wound healing. Acts as a receptor for extracellular ubiquitin; leading to enhanced intracellular calcium ions and reduced cellular cAMP levels. Binds bacterial lipopolysaccharide (LPS) et mediates LPS-induced inflammatory response, including TNF secretion by monocytes (By similarity). Involved in hematopoiesis and in cardiac ventricular septum formation (PubMed:9634237, PubMed:9634238, PubMed:9689100). Also plays an essential role in vascularization of the gastrointestinal tract, probably by regulating vascular branching and/or remodeling processes in endothelial cells (PubMed:9634237). Involved in cerebellar development. In the CNS, could mediate hippocampal-neuron survival (PubMed:9634238, PubMed:9689100).</text>
</comment>
<comment type="subunit">
    <text evidence="2">Monomer. Can form homodimers. Interacts with CD164. Interacts with ARRB2; the interaction is dependent on the C-terminal phosphorylation of CXCR4 and allows activation of MAPK1 and MAPK3. Interacts with ARR3; the interaction is dependent on the C-terminal phosphorylation of CXCR4 and modulates calcium mobilization. Interacts with RNF113A; the interaction, enhanced by CXCL12, promotes CXCR4 ubiquitination and subsequent degradation. Interacts (via the cytoplasmic C-terminal) with ITCH (via the WW domains I and II); the interaction, enhanced by CXCL12, promotes CXCR4 ubiquitination and leads to its degradation. Interacts with extracellular ubiquitin. Interacts with DBN1; this interaction is enhanced by antigenic stimulation. Following LPS binding, may form a complex with GDF5, HSP90AA1 and HSPA8.</text>
</comment>
<comment type="subcellular location">
    <subcellularLocation>
        <location evidence="6 8">Cell membrane</location>
        <topology evidence="2">Multi-pass membrane protein</topology>
    </subcellularLocation>
    <subcellularLocation>
        <location evidence="1">Cell junction</location>
    </subcellularLocation>
    <subcellularLocation>
        <location evidence="1">Early endosome</location>
    </subcellularLocation>
    <subcellularLocation>
        <location evidence="1">Late endosome</location>
    </subcellularLocation>
    <subcellularLocation>
        <location evidence="1">Lysosome</location>
    </subcellularLocation>
    <text evidence="1">In unstimulated cells, diffuse pattern on plasma membrane. On agonist stimulation, colocalizes with ITCH at the plasma membrane where it becomes ubiquitinated (By similarity). In the presence of antigen, distributes to the immunological synapse forming at the T-cell-APC contact area, where it localizes at the peripheral and distal supramolecular activation cluster (SMAC) (By similarity).</text>
</comment>
<comment type="alternative products">
    <event type="alternative splicing"/>
    <isoform>
        <id>P70658-1</id>
        <name>CXCR4-B</name>
        <name>LESTR-B</name>
        <sequence type="displayed"/>
    </isoform>
    <isoform>
        <id>P70658-2</id>
        <name>CXCR4-A</name>
        <name>LESTR-A</name>
        <sequence type="described" ref="VSP_001891"/>
    </isoform>
</comment>
<comment type="tissue specificity">
    <text evidence="9 10">Lymphocytes, macrophages, neutrophils, microglial cells and astrocytes. Found in spleen, thymus, bone marrow, lymph nodes and, at lower levels in brain, small intestine, stomach and kidney. CXCR4-A is predominant in all tissues tested. During embryonic development, high levels are detected in the endothelium of developing blood vessels and in many regions of the developing brain including the olfactory epithelium, olfactory bulb, hippocampus, cerebellum and spinal cord.</text>
</comment>
<comment type="developmental stage">
    <text evidence="5">High expression during embryonic development does not seem to be associated with the differentiation of any particular cell type, but is widely utilized when there is a requirement for cell movement. Frequently associated with less differentiated cell types and down-regulated with subsequent differentiation. Detected in sites with hemopoietic potential: the yolk sac (7.5, 8.5 and 12.5 dpc) and fetal liver (12.5 dpc). During gastrulation, at 7.2 to 7.8 dpc, expressed in the mesoderm and the definitive endoderm. As gastrulation pattern fades (8.5 dpc), expression in the mesoderm is down-regulated, while it becomes predominant in neural ectoderm. Endodermal expression is retained in the foregut and later in a subset of foregut derivatives, including the stomach (10.5 dpc), the cystic ducts of the gall bladder and the lung epithelium (12.5 dpc). In neuronal tissue: at 10.5 and 12.5 dpc, expressed in the dorsal root ganglia, in the ventral mantle layer of the spinal cord (or basal plates), in the hindbrain. At 14.5 dpc, expression more tightly confined to the neural epithelium lining the ventricular space and to the external granular layer of the ventral rhombic lip (the developing cerebellum). Expressed in the outpocketing of the diencephalic floor at 10.5 dpc and in the developing thalamus and, to a lesser extent, the developing hypothalamus. At 14.5 dpc, restricted to the region where thalamus and hypothalamus meet. Detected in a discrete band of cells at the edge of the olfactory bulb. In the vascular system: expressed in the endothelium of numerous blood vessels, but not all, at 10.5, 11.5 and 12.5 dpc, such as vitelline/umbilical vessels, cardiac ventricular wall capillaries, facial vessels and, at 14.5 dpc, in the vasculature of the herniated gut. Expression seems to be associated with expanding vascular networks. In the heart development, expressed at 10.5 dpc in the precursor to the aortopulmonary (AP) septum. At 12.5 dpc, detected in the AP septum at the base of the outflow tract and in the atrioventricular valves. Detected in cranofacial ectoderm from 10.5 to 14.5 dpc. At 10.5 and 11.5 dpc, expressed in the Rathke pouch.</text>
</comment>
<comment type="PTM">
    <text evidence="2">Phosphorylated on agonist stimulation. Rapidly phosphorylated on serine and threonine residues in the C-terminal. Phosphorylation at Ser-331 and Ser-332 leads to recruitment of ITCH, ubiquitination and protein degradation.</text>
</comment>
<comment type="PTM">
    <text evidence="2">Ubiquitinated after ligand binding, leading to its degradation. Ubiquitinated by ITCH at the cell membrane on agonist stimulation. The ubiquitin-dependent mechanism, endosomal sorting complex required for transport (ESCRT), then targets CXCR4 for lysosomal degradation. This process is dependent also on prior Ser-/Thr-phosphorylation in the C-terminal of CXCR4. Also binding of ARRB1 to STAM negatively regulates CXCR4 sorting to lysosomes though modulating ubiquitination of SFR5S.</text>
</comment>
<comment type="PTM">
    <text evidence="2">Sulfation is required for efficient binding of CXCL12/SDF-1alpha and promotes its dimerization.</text>
</comment>
<comment type="PTM">
    <text evidence="2">O- and N-glycosylated. N-glycosylation can mask coreceptor function. The O-glycosylation chondroitin sulfate attachment does not affect interaction with CXCL12/SDF-1alpha nor its coreceptor activity.</text>
</comment>
<comment type="disruption phenotype">
    <text evidence="9 10 11">Half of the embryos die by 17.5 dpc-18.5 dpc and neonates die within a few hours. Mutants display defective vascular development, cerebellar development, B-lymphopoiesis, myelopoiesis, and cardiogenesis with defective formation of the large vessels supplying the gastrointestinal tract.</text>
</comment>
<comment type="similarity">
    <text evidence="3">Belongs to the G-protein coupled receptor 1 family.</text>
</comment>
<evidence type="ECO:0000250" key="1"/>
<evidence type="ECO:0000250" key="2">
    <source>
        <dbReference type="UniProtKB" id="P61073"/>
    </source>
</evidence>
<evidence type="ECO:0000255" key="3">
    <source>
        <dbReference type="PROSITE-ProRule" id="PRU00521"/>
    </source>
</evidence>
<evidence type="ECO:0000256" key="4">
    <source>
        <dbReference type="SAM" id="MobiDB-lite"/>
    </source>
</evidence>
<evidence type="ECO:0000269" key="5">
    <source>
    </source>
</evidence>
<evidence type="ECO:0000269" key="6">
    <source>
    </source>
</evidence>
<evidence type="ECO:0000269" key="7">
    <source>
    </source>
</evidence>
<evidence type="ECO:0000269" key="8">
    <source>
    </source>
</evidence>
<evidence type="ECO:0000269" key="9">
    <source>
    </source>
</evidence>
<evidence type="ECO:0000269" key="10">
    <source>
    </source>
</evidence>
<evidence type="ECO:0000269" key="11">
    <source>
    </source>
</evidence>
<evidence type="ECO:0000303" key="12">
    <source>
    </source>
</evidence>
<evidence type="ECO:0000303" key="13">
    <source>
    </source>
</evidence>
<evidence type="ECO:0000305" key="14"/>
<evidence type="ECO:0007744" key="15">
    <source>
    </source>
</evidence>
<gene>
    <name type="primary">Cxcr4</name>
    <name type="synonym">Cmkar4</name>
    <name type="synonym">Lestr</name>
    <name type="synonym">Sdf1r</name>
</gene>
<dbReference type="EMBL" id="U59760">
    <property type="protein sequence ID" value="AAB07725.1"/>
    <property type="molecule type" value="mRNA"/>
</dbReference>
<dbReference type="EMBL" id="U65580">
    <property type="protein sequence ID" value="AAC52953.1"/>
    <property type="molecule type" value="Genomic_DNA"/>
</dbReference>
<dbReference type="EMBL" id="D87747">
    <property type="protein sequence ID" value="BAA13451.1"/>
    <property type="molecule type" value="mRNA"/>
</dbReference>
<dbReference type="EMBL" id="Z80111">
    <property type="protein sequence ID" value="CAB02201.1"/>
    <property type="molecule type" value="mRNA"/>
</dbReference>
<dbReference type="EMBL" id="Z80112">
    <property type="protein sequence ID" value="CAB02202.1"/>
    <property type="molecule type" value="mRNA"/>
</dbReference>
<dbReference type="EMBL" id="X99581">
    <property type="protein sequence ID" value="CAA67893.1"/>
    <property type="molecule type" value="Genomic_DNA"/>
</dbReference>
<dbReference type="EMBL" id="X99582">
    <property type="protein sequence ID" value="CAA67894.1"/>
    <property type="molecule type" value="mRNA"/>
</dbReference>
<dbReference type="EMBL" id="AB000803">
    <property type="protein sequence ID" value="BAA19187.1"/>
    <property type="molecule type" value="mRNA"/>
</dbReference>
<dbReference type="EMBL" id="BC031665">
    <property type="protein sequence ID" value="AAH31665.1"/>
    <property type="molecule type" value="mRNA"/>
</dbReference>
<dbReference type="EMBL" id="BC098322">
    <property type="protein sequence ID" value="AAH98322.1"/>
    <property type="molecule type" value="mRNA"/>
</dbReference>
<dbReference type="CCDS" id="CCDS15254.1">
    <molecule id="P70658-1"/>
</dbReference>
<dbReference type="RefSeq" id="NP_034041.2">
    <property type="nucleotide sequence ID" value="NM_009911.3"/>
</dbReference>
<dbReference type="SMR" id="P70658"/>
<dbReference type="BioGRID" id="198767">
    <property type="interactions" value="3"/>
</dbReference>
<dbReference type="CORUM" id="P70658"/>
<dbReference type="FunCoup" id="P70658">
    <property type="interactions" value="1144"/>
</dbReference>
<dbReference type="IntAct" id="P70658">
    <property type="interactions" value="4"/>
</dbReference>
<dbReference type="STRING" id="10090.ENSMUSP00000053489"/>
<dbReference type="BindingDB" id="P70658"/>
<dbReference type="ChEMBL" id="CHEMBL1250365"/>
<dbReference type="GuidetoPHARMACOLOGY" id="71"/>
<dbReference type="GlyCosmos" id="P70658">
    <property type="glycosylation" value="2 sites, No reported glycans"/>
</dbReference>
<dbReference type="GlyGen" id="P70658">
    <property type="glycosylation" value="2 sites"/>
</dbReference>
<dbReference type="iPTMnet" id="P70658"/>
<dbReference type="PhosphoSitePlus" id="P70658"/>
<dbReference type="jPOST" id="P70658"/>
<dbReference type="PaxDb" id="10090-ENSMUSP00000053489"/>
<dbReference type="PeptideAtlas" id="P70658"/>
<dbReference type="ProteomicsDB" id="279222">
    <molecule id="P70658-1"/>
</dbReference>
<dbReference type="ProteomicsDB" id="279223">
    <molecule id="P70658-2"/>
</dbReference>
<dbReference type="DNASU" id="12767"/>
<dbReference type="GeneID" id="12767"/>
<dbReference type="KEGG" id="mmu:12767"/>
<dbReference type="UCSC" id="uc007cls.1">
    <molecule id="P70658-2"/>
    <property type="organism name" value="mouse"/>
</dbReference>
<dbReference type="UCSC" id="uc007clt.1">
    <molecule id="P70658-1"/>
    <property type="organism name" value="mouse"/>
</dbReference>
<dbReference type="AGR" id="MGI:109563"/>
<dbReference type="CTD" id="7852"/>
<dbReference type="MGI" id="MGI:109563">
    <property type="gene designation" value="Cxcr4"/>
</dbReference>
<dbReference type="eggNOG" id="KOG3656">
    <property type="taxonomic scope" value="Eukaryota"/>
</dbReference>
<dbReference type="InParanoid" id="P70658"/>
<dbReference type="OrthoDB" id="8413490at2759"/>
<dbReference type="PhylomeDB" id="P70658"/>
<dbReference type="TreeFam" id="TF330966"/>
<dbReference type="Reactome" id="R-MMU-376176">
    <property type="pathway name" value="Signaling by ROBO receptors"/>
</dbReference>
<dbReference type="Reactome" id="R-MMU-380108">
    <property type="pathway name" value="Chemokine receptors bind chemokines"/>
</dbReference>
<dbReference type="Reactome" id="R-MMU-418594">
    <property type="pathway name" value="G alpha (i) signalling events"/>
</dbReference>
<dbReference type="BioGRID-ORCS" id="12767">
    <property type="hits" value="1 hit in 82 CRISPR screens"/>
</dbReference>
<dbReference type="ChiTaRS" id="Cxcr4">
    <property type="organism name" value="mouse"/>
</dbReference>
<dbReference type="PRO" id="PR:P70658"/>
<dbReference type="Proteomes" id="UP000000589">
    <property type="component" value="Unplaced"/>
</dbReference>
<dbReference type="RNAct" id="P70658">
    <property type="molecule type" value="protein"/>
</dbReference>
<dbReference type="GO" id="GO:0009986">
    <property type="term" value="C:cell surface"/>
    <property type="evidence" value="ECO:0000314"/>
    <property type="project" value="BHF-UCL"/>
</dbReference>
<dbReference type="GO" id="GO:0005911">
    <property type="term" value="C:cell-cell junction"/>
    <property type="evidence" value="ECO:0000314"/>
    <property type="project" value="MGI"/>
</dbReference>
<dbReference type="GO" id="GO:0005769">
    <property type="term" value="C:early endosome"/>
    <property type="evidence" value="ECO:0000250"/>
    <property type="project" value="UniProtKB"/>
</dbReference>
<dbReference type="GO" id="GO:0009897">
    <property type="term" value="C:external side of plasma membrane"/>
    <property type="evidence" value="ECO:0000314"/>
    <property type="project" value="MGI"/>
</dbReference>
<dbReference type="GO" id="GO:0030426">
    <property type="term" value="C:growth cone"/>
    <property type="evidence" value="ECO:0000314"/>
    <property type="project" value="MGI"/>
</dbReference>
<dbReference type="GO" id="GO:0005770">
    <property type="term" value="C:late endosome"/>
    <property type="evidence" value="ECO:0000250"/>
    <property type="project" value="UniProtKB"/>
</dbReference>
<dbReference type="GO" id="GO:0005764">
    <property type="term" value="C:lysosome"/>
    <property type="evidence" value="ECO:0000250"/>
    <property type="project" value="UniProtKB"/>
</dbReference>
<dbReference type="GO" id="GO:0005886">
    <property type="term" value="C:plasma membrane"/>
    <property type="evidence" value="ECO:0000314"/>
    <property type="project" value="MGI"/>
</dbReference>
<dbReference type="GO" id="GO:0038147">
    <property type="term" value="F:C-X-C motif chemokine 12 receptor activity"/>
    <property type="evidence" value="ECO:0000250"/>
    <property type="project" value="UniProtKB"/>
</dbReference>
<dbReference type="GO" id="GO:0019955">
    <property type="term" value="F:cytokine binding"/>
    <property type="evidence" value="ECO:0007669"/>
    <property type="project" value="InterPro"/>
</dbReference>
<dbReference type="GO" id="GO:0001667">
    <property type="term" value="P:ameboidal-type cell migration"/>
    <property type="evidence" value="ECO:0000315"/>
    <property type="project" value="MGI"/>
</dbReference>
<dbReference type="GO" id="GO:0009887">
    <property type="term" value="P:animal organ morphogenesis"/>
    <property type="evidence" value="ECO:0000304"/>
    <property type="project" value="ProtInc"/>
</dbReference>
<dbReference type="GO" id="GO:0035904">
    <property type="term" value="P:aorta development"/>
    <property type="evidence" value="ECO:0000315"/>
    <property type="project" value="MGI"/>
</dbReference>
<dbReference type="GO" id="GO:0043534">
    <property type="term" value="P:blood vessel endothelial cell migration"/>
    <property type="evidence" value="ECO:0000315"/>
    <property type="project" value="MGI"/>
</dbReference>
<dbReference type="GO" id="GO:0007420">
    <property type="term" value="P:brain development"/>
    <property type="evidence" value="ECO:0000315"/>
    <property type="project" value="MGI"/>
</dbReference>
<dbReference type="GO" id="GO:0001569">
    <property type="term" value="P:branching involved in blood vessel morphogenesis"/>
    <property type="evidence" value="ECO:0000315"/>
    <property type="project" value="MGI"/>
</dbReference>
<dbReference type="GO" id="GO:0019722">
    <property type="term" value="P:calcium-mediated signaling"/>
    <property type="evidence" value="ECO:0000266"/>
    <property type="project" value="MGI"/>
</dbReference>
<dbReference type="GO" id="GO:0071345">
    <property type="term" value="P:cellular response to cytokine stimulus"/>
    <property type="evidence" value="ECO:0000314"/>
    <property type="project" value="MGI"/>
</dbReference>
<dbReference type="GO" id="GO:0006935">
    <property type="term" value="P:chemotaxis"/>
    <property type="evidence" value="ECO:0007669"/>
    <property type="project" value="InterPro"/>
</dbReference>
<dbReference type="GO" id="GO:0038160">
    <property type="term" value="P:CXCL12-activated CXCR4 signaling pathway"/>
    <property type="evidence" value="ECO:0000314"/>
    <property type="project" value="MGI"/>
</dbReference>
<dbReference type="GO" id="GO:0048699">
    <property type="term" value="P:generation of neurons"/>
    <property type="evidence" value="ECO:0000270"/>
    <property type="project" value="DFLAT"/>
</dbReference>
<dbReference type="GO" id="GO:0007281">
    <property type="term" value="P:germ cell development"/>
    <property type="evidence" value="ECO:0000315"/>
    <property type="project" value="MGI"/>
</dbReference>
<dbReference type="GO" id="GO:0008354">
    <property type="term" value="P:germ cell migration"/>
    <property type="evidence" value="ECO:0000315"/>
    <property type="project" value="MGI"/>
</dbReference>
<dbReference type="GO" id="GO:0035701">
    <property type="term" value="P:hematopoietic stem cell migration"/>
    <property type="evidence" value="ECO:0000315"/>
    <property type="project" value="MGI"/>
</dbReference>
<dbReference type="GO" id="GO:0001822">
    <property type="term" value="P:kidney development"/>
    <property type="evidence" value="ECO:0000315"/>
    <property type="project" value="MGI"/>
</dbReference>
<dbReference type="GO" id="GO:0008045">
    <property type="term" value="P:motor neuron axon guidance"/>
    <property type="evidence" value="ECO:0000315"/>
    <property type="project" value="MGI"/>
</dbReference>
<dbReference type="GO" id="GO:0043217">
    <property type="term" value="P:myelin maintenance"/>
    <property type="evidence" value="ECO:0000315"/>
    <property type="project" value="BHF-UCL"/>
</dbReference>
<dbReference type="GO" id="GO:0007399">
    <property type="term" value="P:nervous system development"/>
    <property type="evidence" value="ECO:0000304"/>
    <property type="project" value="ProtInc"/>
</dbReference>
<dbReference type="GO" id="GO:0061351">
    <property type="term" value="P:neural precursor cell proliferation"/>
    <property type="evidence" value="ECO:0000270"/>
    <property type="project" value="DFLAT"/>
</dbReference>
<dbReference type="GO" id="GO:0001764">
    <property type="term" value="P:neuron migration"/>
    <property type="evidence" value="ECO:0000314"/>
    <property type="project" value="MGI"/>
</dbReference>
<dbReference type="GO" id="GO:0090280">
    <property type="term" value="P:positive regulation of calcium ion import"/>
    <property type="evidence" value="ECO:0000314"/>
    <property type="project" value="MGI"/>
</dbReference>
<dbReference type="GO" id="GO:0120162">
    <property type="term" value="P:positive regulation of cold-induced thermogenesis"/>
    <property type="evidence" value="ECO:0000315"/>
    <property type="project" value="YuBioLab"/>
</dbReference>
<dbReference type="GO" id="GO:0070374">
    <property type="term" value="P:positive regulation of ERK1 and ERK2 cascade"/>
    <property type="evidence" value="ECO:0000315"/>
    <property type="project" value="MGI"/>
</dbReference>
<dbReference type="GO" id="GO:0048714">
    <property type="term" value="P:positive regulation of oligodendrocyte differentiation"/>
    <property type="evidence" value="ECO:0000315"/>
    <property type="project" value="BHF-UCL"/>
</dbReference>
<dbReference type="GO" id="GO:0030334">
    <property type="term" value="P:regulation of cell migration"/>
    <property type="evidence" value="ECO:0000315"/>
    <property type="project" value="MGI"/>
</dbReference>
<dbReference type="GO" id="GO:2001222">
    <property type="term" value="P:regulation of neuron migration"/>
    <property type="evidence" value="ECO:0000315"/>
    <property type="project" value="MGI"/>
</dbReference>
<dbReference type="GO" id="GO:0042098">
    <property type="term" value="P:T cell proliferation"/>
    <property type="evidence" value="ECO:0000315"/>
    <property type="project" value="MGI"/>
</dbReference>
<dbReference type="GO" id="GO:0003281">
    <property type="term" value="P:ventricular septum development"/>
    <property type="evidence" value="ECO:0000315"/>
    <property type="project" value="MGI"/>
</dbReference>
<dbReference type="CDD" id="cd15179">
    <property type="entry name" value="7tmA_CXCR4"/>
    <property type="match status" value="1"/>
</dbReference>
<dbReference type="FunFam" id="1.20.1070.10:FF:000063">
    <property type="entry name" value="C-X-C chemokine receptor type 4"/>
    <property type="match status" value="1"/>
</dbReference>
<dbReference type="Gene3D" id="1.20.1070.10">
    <property type="entry name" value="Rhodopsin 7-helix transmembrane proteins"/>
    <property type="match status" value="1"/>
</dbReference>
<dbReference type="InterPro" id="IPR050119">
    <property type="entry name" value="CCR1-9-like"/>
</dbReference>
<dbReference type="InterPro" id="IPR022726">
    <property type="entry name" value="Chemokine_CXCR4_N_dom"/>
</dbReference>
<dbReference type="InterPro" id="IPR000355">
    <property type="entry name" value="Chemokine_rcpt"/>
</dbReference>
<dbReference type="InterPro" id="IPR001277">
    <property type="entry name" value="CXCR4/ACKR2"/>
</dbReference>
<dbReference type="InterPro" id="IPR000276">
    <property type="entry name" value="GPCR_Rhodpsn"/>
</dbReference>
<dbReference type="InterPro" id="IPR017452">
    <property type="entry name" value="GPCR_Rhodpsn_7TM"/>
</dbReference>
<dbReference type="PANTHER" id="PTHR10489:SF594">
    <property type="entry name" value="C-X-C CHEMOKINE RECEPTOR TYPE 4"/>
    <property type="match status" value="1"/>
</dbReference>
<dbReference type="PANTHER" id="PTHR10489">
    <property type="entry name" value="CELL ADHESION MOLECULE"/>
    <property type="match status" value="1"/>
</dbReference>
<dbReference type="Pfam" id="PF00001">
    <property type="entry name" value="7tm_1"/>
    <property type="match status" value="1"/>
</dbReference>
<dbReference type="Pfam" id="PF12109">
    <property type="entry name" value="CXCR4_N"/>
    <property type="match status" value="1"/>
</dbReference>
<dbReference type="PRINTS" id="PR00657">
    <property type="entry name" value="CCCHEMOKINER"/>
</dbReference>
<dbReference type="PRINTS" id="PR00645">
    <property type="entry name" value="CXCCHMKINER4"/>
</dbReference>
<dbReference type="PRINTS" id="PR00237">
    <property type="entry name" value="GPCRRHODOPSN"/>
</dbReference>
<dbReference type="SUPFAM" id="SSF81321">
    <property type="entry name" value="Family A G protein-coupled receptor-like"/>
    <property type="match status" value="1"/>
</dbReference>
<dbReference type="PROSITE" id="PS00237">
    <property type="entry name" value="G_PROTEIN_RECEP_F1_1"/>
    <property type="match status" value="1"/>
</dbReference>
<dbReference type="PROSITE" id="PS50262">
    <property type="entry name" value="G_PROTEIN_RECEP_F1_2"/>
    <property type="match status" value="1"/>
</dbReference>
<organism>
    <name type="scientific">Mus musculus</name>
    <name type="common">Mouse</name>
    <dbReference type="NCBI Taxonomy" id="10090"/>
    <lineage>
        <taxon>Eukaryota</taxon>
        <taxon>Metazoa</taxon>
        <taxon>Chordata</taxon>
        <taxon>Craniata</taxon>
        <taxon>Vertebrata</taxon>
        <taxon>Euteleostomi</taxon>
        <taxon>Mammalia</taxon>
        <taxon>Eutheria</taxon>
        <taxon>Euarchontoglires</taxon>
        <taxon>Glires</taxon>
        <taxon>Rodentia</taxon>
        <taxon>Myomorpha</taxon>
        <taxon>Muroidea</taxon>
        <taxon>Muridae</taxon>
        <taxon>Murinae</taxon>
        <taxon>Mus</taxon>
        <taxon>Mus</taxon>
    </lineage>
</organism>
<name>CXCR4_MOUSE</name>
<feature type="chain" id="PRO_0000069355" description="C-X-C chemokine receptor type 4">
    <location>
        <begin position="1"/>
        <end position="359"/>
    </location>
</feature>
<feature type="topological domain" description="Extracellular" evidence="14">
    <location>
        <begin position="1"/>
        <end position="40"/>
    </location>
</feature>
<feature type="transmembrane region" description="Helical; Name=1" evidence="2">
    <location>
        <begin position="41"/>
        <end position="65"/>
    </location>
</feature>
<feature type="topological domain" description="Cytoplasmic" evidence="14">
    <location>
        <begin position="66"/>
        <end position="79"/>
    </location>
</feature>
<feature type="transmembrane region" description="Helical; Name=2" evidence="2">
    <location>
        <begin position="80"/>
        <end position="101"/>
    </location>
</feature>
<feature type="topological domain" description="Extracellular" evidence="14">
    <location>
        <begin position="102"/>
        <end position="112"/>
    </location>
</feature>
<feature type="transmembrane region" description="Helical; Name=3" evidence="2">
    <location>
        <begin position="113"/>
        <end position="132"/>
    </location>
</feature>
<feature type="topological domain" description="Cytoplasmic" evidence="14">
    <location>
        <begin position="133"/>
        <end position="156"/>
    </location>
</feature>
<feature type="transmembrane region" description="Helical; Name=4" evidence="2">
    <location>
        <begin position="157"/>
        <end position="176"/>
    </location>
</feature>
<feature type="topological domain" description="Extracellular" evidence="14">
    <location>
        <begin position="177"/>
        <end position="202"/>
    </location>
</feature>
<feature type="transmembrane region" description="Helical; Name=5" evidence="2">
    <location>
        <begin position="203"/>
        <end position="223"/>
    </location>
</feature>
<feature type="topological domain" description="Cytoplasmic" evidence="14">
    <location>
        <begin position="224"/>
        <end position="248"/>
    </location>
</feature>
<feature type="transmembrane region" description="Helical; Name=6" evidence="2">
    <location>
        <begin position="249"/>
        <end position="268"/>
    </location>
</feature>
<feature type="topological domain" description="Extracellular" evidence="14">
    <location>
        <begin position="269"/>
        <end position="289"/>
    </location>
</feature>
<feature type="transmembrane region" description="Helical; Name=7" evidence="2">
    <location>
        <begin position="290"/>
        <end position="309"/>
    </location>
</feature>
<feature type="topological domain" description="Cytoplasmic" evidence="14">
    <location>
        <begin position="310"/>
        <end position="359"/>
    </location>
</feature>
<feature type="region of interest" description="Important for chemokine binding and signaling" evidence="1">
    <location>
        <begin position="1"/>
        <end position="23"/>
    </location>
</feature>
<feature type="region of interest" description="Chemokine binding" evidence="1">
    <location>
        <begin position="96"/>
        <end position="99"/>
    </location>
</feature>
<feature type="region of interest" description="Chemokine binding" evidence="1">
    <location>
        <begin position="115"/>
        <end position="119"/>
    </location>
</feature>
<feature type="region of interest" description="Involved in dimerization; when bound to chemokine" evidence="1">
    <location>
        <begin position="137"/>
        <end position="149"/>
    </location>
</feature>
<feature type="region of interest" description="Chemokine binding, important for signaling" evidence="1">
    <location>
        <begin position="193"/>
        <end position="197"/>
    </location>
</feature>
<feature type="region of interest" description="Involved in dimerization" evidence="1">
    <location>
        <begin position="198"/>
        <end position="217"/>
    </location>
</feature>
<feature type="region of interest" description="Involved in dimerization" evidence="1">
    <location>
        <begin position="273"/>
        <end position="275"/>
    </location>
</feature>
<feature type="region of interest" description="Disordered" evidence="4">
    <location>
        <begin position="335"/>
        <end position="359"/>
    </location>
</feature>
<feature type="short sequence motif" description="Important for signaling" evidence="1">
    <location>
        <begin position="135"/>
        <end position="137"/>
    </location>
</feature>
<feature type="compositionally biased region" description="Low complexity" evidence="4">
    <location>
        <begin position="344"/>
        <end position="359"/>
    </location>
</feature>
<feature type="site" description="Chemokine binding" evidence="1">
    <location>
        <position position="173"/>
    </location>
</feature>
<feature type="site" description="Chemokine binding" evidence="1">
    <location>
        <position position="295"/>
    </location>
</feature>
<feature type="modified residue" description="Sulfotyrosine" evidence="2">
    <location>
        <position position="9"/>
    </location>
</feature>
<feature type="modified residue" description="Sulfotyrosine" evidence="2">
    <location>
        <position position="14"/>
    </location>
</feature>
<feature type="modified residue" description="Sulfotyrosine" evidence="2">
    <location>
        <position position="23"/>
    </location>
</feature>
<feature type="modified residue" description="Phosphoserine" evidence="15">
    <location>
        <position position="326"/>
    </location>
</feature>
<feature type="modified residue" description="Phosphoserine" evidence="2">
    <location>
        <position position="328"/>
    </location>
</feature>
<feature type="modified residue" description="Phosphoserine; by PKC and GRK6" evidence="2">
    <location>
        <position position="331"/>
    </location>
</feature>
<feature type="modified residue" description="Phosphoserine; by PKC and GRK6" evidence="2">
    <location>
        <position position="332"/>
    </location>
</feature>
<feature type="modified residue" description="Phosphoserine; by GRK6" evidence="2">
    <location>
        <position position="337"/>
    </location>
</feature>
<feature type="modified residue" description="Phosphoserine; by GRK6" evidence="2">
    <location>
        <position position="346"/>
    </location>
</feature>
<feature type="modified residue" description="Phosphoserine" evidence="2">
    <location>
        <position position="355"/>
    </location>
</feature>
<feature type="modified residue" description="Phosphoserine" evidence="2">
    <location>
        <position position="358"/>
    </location>
</feature>
<feature type="glycosylation site" description="N-linked (GlcNAc...) asparagine" evidence="1">
    <location>
        <position position="13"/>
    </location>
</feature>
<feature type="glycosylation site" description="O-linked (Xyl...) (chondroitin sulfate) serine" evidence="2">
    <location>
        <position position="20"/>
    </location>
</feature>
<feature type="disulfide bond" evidence="3">
    <location>
        <begin position="30"/>
        <end position="281"/>
    </location>
</feature>
<feature type="disulfide bond" evidence="3">
    <location>
        <begin position="111"/>
        <end position="193"/>
    </location>
</feature>
<feature type="cross-link" description="Glycyl lysine isopeptide (Lys-Gly) (interchain with G-Cter in ubiquitin)" evidence="2">
    <location>
        <position position="338"/>
    </location>
</feature>
<feature type="splice variant" id="VSP_001891" description="In isoform CXCR4-A." evidence="13">
    <location>
        <begin position="6"/>
        <end position="7"/>
    </location>
</feature>
<feature type="sequence conflict" description="In Ref. 4; CAA67893 and 6; BAA19187." evidence="14" ref="4 6">
    <original>I</original>
    <variation>V</variation>
    <location>
        <position position="216"/>
    </location>
</feature>
<protein>
    <recommendedName>
        <fullName>C-X-C chemokine receptor type 4</fullName>
        <shortName>CXC-R4</shortName>
        <shortName>CXCR-4</shortName>
    </recommendedName>
    <alternativeName>
        <fullName evidence="12">Fusin</fullName>
    </alternativeName>
    <alternativeName>
        <fullName>Leukocyte-derived seven transmembrane domain receptor</fullName>
        <shortName evidence="13">LESTR</shortName>
    </alternativeName>
    <alternativeName>
        <fullName>Pre-B-cell-derived chemokine receptor</fullName>
        <shortName>PB-CKR</shortName>
    </alternativeName>
    <alternativeName>
        <fullName>Stromal cell-derived factor 1 receptor</fullName>
        <shortName>SDF-1 receptor</shortName>
    </alternativeName>
    <cdAntigenName>CD184</cdAntigenName>
</protein>
<proteinExistence type="evidence at protein level"/>
<accession>P70658</accession>
<accession>O09059</accession>
<accession>O09062</accession>
<accession>P70233</accession>
<accession>P70346</accession>
<accession>Q4KMW1</accession>
<reference key="1">
    <citation type="journal article" date="1996" name="J. Immunol.">
        <title>Cloning of the mouse fusin gene, homologue to a human HIV-1 co-factor.</title>
        <authorList>
            <person name="Heesen M."/>
            <person name="Berman M.A."/>
            <person name="Benson J.D."/>
            <person name="Gerard C."/>
            <person name="Dorf M.E."/>
        </authorList>
    </citation>
    <scope>NUCLEOTIDE SEQUENCE [GENOMIC DNA] (ISOFORM CXCR4-B)</scope>
    <source>
        <strain>129/Sv</strain>
        <strain>C57BL/6J</strain>
        <tissue>Peritoneal exudate</tissue>
    </source>
</reference>
<reference key="2">
    <citation type="journal article" date="1996" name="Proc. Natl. Acad. Sci. U.S.A.">
        <title>Molecular cloning and characterization of a murine pre-B-cell growth-stimulating factor/stromal cell-derived factor 1 receptor, a murine homolog of the human immunodeficiency virus 1 entry coreceptor fusin.</title>
        <authorList>
            <person name="Nagasawa T."/>
            <person name="Nakajima T."/>
            <person name="Tachibana K."/>
            <person name="Iizasa H."/>
            <person name="Bleul C.C."/>
            <person name="Yoshie O."/>
            <person name="Matsushima K."/>
            <person name="Yoshida N."/>
            <person name="Springer T.A."/>
            <person name="Kishimoto T."/>
        </authorList>
    </citation>
    <scope>NUCLEOTIDE SEQUENCE [MRNA] (ISOFORM CXCR4-B)</scope>
    <scope>FUNCTION</scope>
    <scope>SUBCELLULAR LOCATION</scope>
    <source>
        <tissue>Pre-B cell</tissue>
    </source>
</reference>
<reference key="3">
    <citation type="submission" date="1996-09" db="EMBL/GenBank/DDBJ databases">
        <authorList>
            <person name="Schubel A."/>
            <person name="Burgstahler R."/>
            <person name="Lipp M."/>
        </authorList>
    </citation>
    <scope>NUCLEOTIDE SEQUENCE [MRNA] (ISOFORM CXCR4-B)</scope>
    <source>
        <strain>129/Sv</strain>
        <tissue>Thymus</tissue>
    </source>
</reference>
<reference key="4">
    <citation type="journal article" date="1997" name="Eur. J. Immunol.">
        <title>Two murine homologues of the human chemokine receptor CXCR4 mediating stromal cell-derived factor 1alpha activation of Gi2 are differentially expressed in vivo.</title>
        <authorList>
            <person name="Moepps B."/>
            <person name="Frodl R."/>
            <person name="Rodewald H.-R."/>
            <person name="Baggiolini M."/>
            <person name="Gierschik P."/>
        </authorList>
    </citation>
    <scope>NUCLEOTIDE SEQUENCE [GENOMIC DNA / MRNA] (ISOFORMS CXCR4-A AND CXCR4-B)</scope>
    <scope>FUNCTION</scope>
    <source>
        <strain>C57BL/6J X CBA/J</strain>
        <tissue>Thymus</tissue>
    </source>
</reference>
<reference key="5">
    <citation type="journal article" date="1997" name="J. Immunol.">
        <title>Alternate splicing of mouse fusin/CXC chemokine receptor-4: stromal cell-derived factor-1alpha is a ligand for both CXC chemokine receptor-4 isoforms.</title>
        <authorList>
            <person name="Heesen M."/>
            <person name="Berman M.A."/>
            <person name="Hoepken U.E."/>
            <person name="Gerard N.P."/>
            <person name="Dorf M.E."/>
        </authorList>
    </citation>
    <scope>NUCLEOTIDE SEQUENCE [GENOMIC DNA] (ISOFORMS CXCR4-A AND CXCR4-B)</scope>
    <scope>FUNCTION</scope>
</reference>
<reference key="6">
    <citation type="submission" date="1997-02" db="EMBL/GenBank/DDBJ databases">
        <authorList>
            <person name="Suzuki G."/>
            <person name="Nakata Y."/>
            <person name="Uzawa A."/>
            <person name="Shirasawa T."/>
            <person name="Saito T."/>
            <person name="Mita K."/>
        </authorList>
    </citation>
    <scope>NUCLEOTIDE SEQUENCE [MRNA] (ISOFORM CXCR4-B)</scope>
    <source>
        <strain>C57BL/6J</strain>
        <tissue>Thymus</tissue>
    </source>
</reference>
<reference key="7">
    <citation type="journal article" date="2004" name="Genome Res.">
        <title>The status, quality, and expansion of the NIH full-length cDNA project: the Mammalian Gene Collection (MGC).</title>
        <authorList>
            <consortium name="The MGC Project Team"/>
        </authorList>
    </citation>
    <scope>NUCLEOTIDE SEQUENCE [LARGE SCALE MRNA] (ISOFORM CXCR4-B)</scope>
    <source>
        <strain>FVB/N</strain>
        <tissue>Mammary gland</tissue>
    </source>
</reference>
<reference key="8">
    <citation type="journal article" date="1998" name="J. Recept. Signal Transduct.">
        <title>Genomic organization and expression of the CXCR4 gene in mouse and man: absence of a splice variant corresponding to mouse CXCR4-B in human tissues.</title>
        <authorList>
            <person name="Frodl R."/>
            <person name="Gierschik P."/>
            <person name="Moepps B."/>
        </authorList>
    </citation>
    <scope>ALTERNATIVE SPLICING</scope>
</reference>
<reference key="9">
    <citation type="journal article" date="1998" name="Nature">
        <title>The chemokine receptor CXCR4 is essential for vascularization of the gastrointestinal tract.</title>
        <authorList>
            <person name="Tachibana K."/>
            <person name="Hirota S."/>
            <person name="Iizasa H."/>
            <person name="Yoshida H."/>
            <person name="Kawabata K."/>
            <person name="Kataoka Y."/>
            <person name="Kitamura Y."/>
            <person name="Matsushima K."/>
            <person name="Yoshida N."/>
            <person name="Nishikawa S."/>
            <person name="Kishimoto T."/>
            <person name="Nagasawa T."/>
        </authorList>
    </citation>
    <scope>FUNCTION</scope>
    <scope>TISSUE SPECIFICITY</scope>
    <scope>DISRUPTION PHENOTYPE</scope>
</reference>
<reference key="10">
    <citation type="journal article" date="1998" name="Nature">
        <title>Function of the chemokine receptor CXCR4 in haematopoiesis and in cerebellar development.</title>
        <authorList>
            <person name="Zou Y.-R."/>
            <person name="Kottmann A.H."/>
            <person name="Kuroda M."/>
            <person name="Taniuchi I."/>
            <person name="Littman D.R."/>
        </authorList>
    </citation>
    <scope>FUNCTION</scope>
    <scope>TISSUE SPECIFICITY</scope>
    <scope>DISRUPTION PHENOTYPE</scope>
</reference>
<reference key="11">
    <citation type="journal article" date="1998" name="Proc. Natl. Acad. Sci. U.S.A.">
        <title>Impaired B-lymphopoiesis, myelopoiesis, and derailed cerebellar neuron migration in CXCR4- and SDF-1-deficient mice.</title>
        <authorList>
            <person name="Ma Q."/>
            <person name="Jones D."/>
            <person name="Borghesani P.R."/>
            <person name="Segal R.A."/>
            <person name="Nagasawa T."/>
            <person name="Kishimoto T."/>
            <person name="Bronson R.T."/>
            <person name="Springer T.A."/>
        </authorList>
    </citation>
    <scope>FUNCTION</scope>
    <scope>DISRUPTION PHENOTYPE</scope>
</reference>
<reference key="12">
    <citation type="journal article" date="1999" name="Dev. Biol.">
        <title>Embryonic expression and function of the chemokine SDF-1 and its receptor, CXCR4.</title>
        <authorList>
            <person name="McGrath K.E."/>
            <person name="Koniski A.D."/>
            <person name="Maltby K.M."/>
            <person name="McGann J.K."/>
            <person name="Palis J."/>
        </authorList>
    </citation>
    <scope>DEVELOPMENTAL STAGE</scope>
    <source>
        <strain>ICR</strain>
    </source>
</reference>
<reference key="13">
    <citation type="journal article" date="2008" name="J. Biol. Chem.">
        <title>Regulation of myoblast motility and fusion by the CXCR4-associated sialomucin, CD164.</title>
        <authorList>
            <person name="Bae G.-U."/>
            <person name="Gaio U."/>
            <person name="Yang Y.-J."/>
            <person name="Lee H.-J."/>
            <person name="Kang J.-S."/>
            <person name="Krauss R.S."/>
        </authorList>
    </citation>
    <scope>INTERACTION WITH CD164</scope>
</reference>
<reference key="14">
    <citation type="journal article" date="2010" name="Cell">
        <title>A tissue-specific atlas of mouse protein phosphorylation and expression.</title>
        <authorList>
            <person name="Huttlin E.L."/>
            <person name="Jedrychowski M.P."/>
            <person name="Elias J.E."/>
            <person name="Goswami T."/>
            <person name="Rad R."/>
            <person name="Beausoleil S.A."/>
            <person name="Villen J."/>
            <person name="Haas W."/>
            <person name="Sowa M.E."/>
            <person name="Gygi S.P."/>
        </authorList>
    </citation>
    <scope>PHOSPHORYLATION [LARGE SCALE ANALYSIS] AT SER-326</scope>
    <scope>IDENTIFICATION BY MASS SPECTROMETRY [LARGE SCALE ANALYSIS]</scope>
    <source>
        <tissue>Spleen</tissue>
    </source>
</reference>
<sequence>MEPISVSIYTSDNYSEEVGSGDYDSNKEPCFRDENVHFNRIFLPTIYFIIFLTGIVGNGLVILVMGYQKKLRSMTDKYRLHLSVADLLFVITLPFWAVDAMADWYFGKFLCKAVHIIYTVNLYSSVLILAFISLDRYLAIVHATNSQRPRKLLAEKAVYVGVWIPALLLTIPDFIFADVSQGDISQGDDRYICDRLYPDSLWMVVFQFQHIMVGLILPGIVILSCYCIIISKLSHSKGHQKRKALKTTVILILAFFACWLPYYVGISIDSFILLGVIKQGCDFESIVHKWISITEALAFFHCCLNPILYAFLGAKFKSSAQHALNSMSRGSSLKILSKGKRGGHSSVSTESESSSFHSS</sequence>